<name>METAS_ECOLC</name>
<feature type="chain" id="PRO_1000078932" description="Homoserine O-succinyltransferase">
    <location>
        <begin position="1"/>
        <end position="309"/>
    </location>
</feature>
<feature type="active site" description="Acyl-thioester intermediate" evidence="1">
    <location>
        <position position="142"/>
    </location>
</feature>
<feature type="active site" description="Proton acceptor" evidence="1">
    <location>
        <position position="235"/>
    </location>
</feature>
<feature type="active site" evidence="1">
    <location>
        <position position="237"/>
    </location>
</feature>
<feature type="binding site" evidence="1">
    <location>
        <position position="163"/>
    </location>
    <ligand>
        <name>substrate</name>
    </ligand>
</feature>
<feature type="binding site" evidence="1">
    <location>
        <position position="192"/>
    </location>
    <ligand>
        <name>substrate</name>
    </ligand>
</feature>
<feature type="binding site" evidence="1">
    <location>
        <position position="249"/>
    </location>
    <ligand>
        <name>substrate</name>
    </ligand>
</feature>
<feature type="site" description="Important for acyl-CoA specificity" evidence="1">
    <location>
        <position position="111"/>
    </location>
</feature>
<feature type="site" description="Important for substrate specificity" evidence="1">
    <location>
        <position position="192"/>
    </location>
</feature>
<gene>
    <name evidence="1" type="primary">metAS</name>
    <name type="ordered locus">EcolC_4017</name>
</gene>
<protein>
    <recommendedName>
        <fullName evidence="1">Homoserine O-succinyltransferase</fullName>
        <shortName evidence="1">HST</shortName>
        <ecNumber evidence="1">2.3.1.46</ecNumber>
    </recommendedName>
    <alternativeName>
        <fullName evidence="1">Homoserine transsuccinylase</fullName>
        <shortName evidence="1">HTS</shortName>
    </alternativeName>
</protein>
<proteinExistence type="inferred from homology"/>
<reference key="1">
    <citation type="submission" date="2008-02" db="EMBL/GenBank/DDBJ databases">
        <title>Complete sequence of Escherichia coli C str. ATCC 8739.</title>
        <authorList>
            <person name="Copeland A."/>
            <person name="Lucas S."/>
            <person name="Lapidus A."/>
            <person name="Glavina del Rio T."/>
            <person name="Dalin E."/>
            <person name="Tice H."/>
            <person name="Bruce D."/>
            <person name="Goodwin L."/>
            <person name="Pitluck S."/>
            <person name="Kiss H."/>
            <person name="Brettin T."/>
            <person name="Detter J.C."/>
            <person name="Han C."/>
            <person name="Kuske C.R."/>
            <person name="Schmutz J."/>
            <person name="Larimer F."/>
            <person name="Land M."/>
            <person name="Hauser L."/>
            <person name="Kyrpides N."/>
            <person name="Mikhailova N."/>
            <person name="Ingram L."/>
            <person name="Richardson P."/>
        </authorList>
    </citation>
    <scope>NUCLEOTIDE SEQUENCE [LARGE SCALE GENOMIC DNA]</scope>
    <source>
        <strain>ATCC 8739 / DSM 1576 / NBRC 3972 / NCIMB 8545 / WDCM 00012 / Crooks</strain>
    </source>
</reference>
<keyword id="KW-0012">Acyltransferase</keyword>
<keyword id="KW-0028">Amino-acid biosynthesis</keyword>
<keyword id="KW-0963">Cytoplasm</keyword>
<keyword id="KW-0486">Methionine biosynthesis</keyword>
<keyword id="KW-0808">Transferase</keyword>
<sequence>MPIRVPDELPAVNFLREENVFVMTTSRASGQEIRPLKVLILNLMPKKIETENQFLRLLSNSPLQVDIQLLRIDSRESRNTPAEHLNNFYCNFEDIQDQNFDGLIVTGAPLGLVEFNDVAYWPQIKQVLEWSKDHVTSTLFVCWAVQAALNILYGIPKQTRTDKLSGVYEHHILHPHALLTRGFDDSFLAPHSRYADFPAALIRDYTDLEILAETEEGDAYLFASKDKRIAFVTGHPEYDAQTLAQEFFRDVEAGLDPDVPYNYFPHNDPQNTPRASWRSHGNLLFTNWLNYYVYQITPYDLRHMNPTLD</sequence>
<evidence type="ECO:0000255" key="1">
    <source>
        <dbReference type="HAMAP-Rule" id="MF_00295"/>
    </source>
</evidence>
<organism>
    <name type="scientific">Escherichia coli (strain ATCC 8739 / DSM 1576 / NBRC 3972 / NCIMB 8545 / WDCM 00012 / Crooks)</name>
    <dbReference type="NCBI Taxonomy" id="481805"/>
    <lineage>
        <taxon>Bacteria</taxon>
        <taxon>Pseudomonadati</taxon>
        <taxon>Pseudomonadota</taxon>
        <taxon>Gammaproteobacteria</taxon>
        <taxon>Enterobacterales</taxon>
        <taxon>Enterobacteriaceae</taxon>
        <taxon>Escherichia</taxon>
    </lineage>
</organism>
<comment type="function">
    <text evidence="1">Transfers a succinyl group from succinyl-CoA to L-homoserine, forming succinyl-L-homoserine.</text>
</comment>
<comment type="catalytic activity">
    <reaction evidence="1">
        <text>L-homoserine + succinyl-CoA = O-succinyl-L-homoserine + CoA</text>
        <dbReference type="Rhea" id="RHEA:22008"/>
        <dbReference type="ChEBI" id="CHEBI:57287"/>
        <dbReference type="ChEBI" id="CHEBI:57292"/>
        <dbReference type="ChEBI" id="CHEBI:57476"/>
        <dbReference type="ChEBI" id="CHEBI:57661"/>
        <dbReference type="EC" id="2.3.1.46"/>
    </reaction>
</comment>
<comment type="pathway">
    <text evidence="1">Amino-acid biosynthesis; L-methionine biosynthesis via de novo pathway; O-succinyl-L-homoserine from L-homoserine: step 1/1.</text>
</comment>
<comment type="subunit">
    <text evidence="1">Homodimer.</text>
</comment>
<comment type="subcellular location">
    <subcellularLocation>
        <location evidence="1">Cytoplasm</location>
    </subcellularLocation>
</comment>
<comment type="similarity">
    <text evidence="1">Belongs to the MetA family.</text>
</comment>
<accession>B1IUN9</accession>
<dbReference type="EC" id="2.3.1.46" evidence="1"/>
<dbReference type="EMBL" id="CP000946">
    <property type="protein sequence ID" value="ACA79616.1"/>
    <property type="molecule type" value="Genomic_DNA"/>
</dbReference>
<dbReference type="SMR" id="B1IUN9"/>
<dbReference type="KEGG" id="ecl:EcolC_4017"/>
<dbReference type="HOGENOM" id="CLU_057851_0_1_6"/>
<dbReference type="UniPathway" id="UPA00051">
    <property type="reaction ID" value="UER00075"/>
</dbReference>
<dbReference type="GO" id="GO:0005737">
    <property type="term" value="C:cytoplasm"/>
    <property type="evidence" value="ECO:0007669"/>
    <property type="project" value="UniProtKB-SubCell"/>
</dbReference>
<dbReference type="GO" id="GO:0004414">
    <property type="term" value="F:homoserine O-acetyltransferase activity"/>
    <property type="evidence" value="ECO:0007669"/>
    <property type="project" value="UniProtKB-UniRule"/>
</dbReference>
<dbReference type="GO" id="GO:0008899">
    <property type="term" value="F:homoserine O-succinyltransferase activity"/>
    <property type="evidence" value="ECO:0007669"/>
    <property type="project" value="UniProtKB-EC"/>
</dbReference>
<dbReference type="GO" id="GO:0019281">
    <property type="term" value="P:L-methionine biosynthetic process from homoserine via O-succinyl-L-homoserine and cystathionine"/>
    <property type="evidence" value="ECO:0007669"/>
    <property type="project" value="InterPro"/>
</dbReference>
<dbReference type="CDD" id="cd03131">
    <property type="entry name" value="GATase1_HTS"/>
    <property type="match status" value="1"/>
</dbReference>
<dbReference type="FunFam" id="3.40.50.880:FF:000004">
    <property type="entry name" value="Homoserine O-succinyltransferase"/>
    <property type="match status" value="1"/>
</dbReference>
<dbReference type="Gene3D" id="3.40.50.880">
    <property type="match status" value="1"/>
</dbReference>
<dbReference type="HAMAP" id="MF_00295">
    <property type="entry name" value="MetA_acyltransf"/>
    <property type="match status" value="1"/>
</dbReference>
<dbReference type="InterPro" id="IPR029062">
    <property type="entry name" value="Class_I_gatase-like"/>
</dbReference>
<dbReference type="InterPro" id="IPR005697">
    <property type="entry name" value="HST_MetA"/>
</dbReference>
<dbReference type="InterPro" id="IPR033752">
    <property type="entry name" value="MetA_family"/>
</dbReference>
<dbReference type="NCBIfam" id="TIGR01001">
    <property type="entry name" value="metA"/>
    <property type="match status" value="1"/>
</dbReference>
<dbReference type="PANTHER" id="PTHR20919">
    <property type="entry name" value="HOMOSERINE O-SUCCINYLTRANSFERASE"/>
    <property type="match status" value="1"/>
</dbReference>
<dbReference type="PANTHER" id="PTHR20919:SF0">
    <property type="entry name" value="HOMOSERINE O-SUCCINYLTRANSFERASE"/>
    <property type="match status" value="1"/>
</dbReference>
<dbReference type="Pfam" id="PF04204">
    <property type="entry name" value="HTS"/>
    <property type="match status" value="1"/>
</dbReference>
<dbReference type="PIRSF" id="PIRSF000450">
    <property type="entry name" value="H_ser_succinyltr"/>
    <property type="match status" value="1"/>
</dbReference>
<dbReference type="SUPFAM" id="SSF52317">
    <property type="entry name" value="Class I glutamine amidotransferase-like"/>
    <property type="match status" value="1"/>
</dbReference>